<gene>
    <name evidence="1" type="primary">rplD</name>
</gene>
<protein>
    <recommendedName>
        <fullName evidence="1">Large ribosomal subunit protein uL4</fullName>
    </recommendedName>
    <alternativeName>
        <fullName evidence="3">50S ribosomal protein L4</fullName>
    </alternativeName>
</protein>
<sequence>MTLKVDVKTPAGKTDGSVELPAELFDVEPNIALMHQVVTAQLAAKRQGTHSTKTRGEVSGGGKKPYRQKGSGRARQGSTRAPQFTGGGTVHGPKPRDYSQRTPKKMIAAALRGALSDRARNDRIHAVTELVEGQTPSTKSAKTFLGTLTENKKVLVVIGRTDEVGAKSVRNLPGVHVISPDQLNTYDVLNADDVVFSVEALNAYISANSKEGASV</sequence>
<comment type="function">
    <text evidence="1">One of the primary rRNA binding proteins, this protein initially binds near the 5'-end of the 23S rRNA. It is important during the early stages of 50S assembly. It makes multiple contacts with different domains of the 23S rRNA in the assembled 50S subunit and ribosome.</text>
</comment>
<comment type="function">
    <text evidence="1">Forms part of the polypeptide exit tunnel.</text>
</comment>
<comment type="subunit">
    <text evidence="1">Part of the 50S ribosomal subunit.</text>
</comment>
<comment type="similarity">
    <text evidence="1">Belongs to the universal ribosomal protein uL4 family.</text>
</comment>
<organism>
    <name type="scientific">Mycolicibacterium smegmatis</name>
    <name type="common">Mycobacterium smegmatis</name>
    <dbReference type="NCBI Taxonomy" id="1772"/>
    <lineage>
        <taxon>Bacteria</taxon>
        <taxon>Bacillati</taxon>
        <taxon>Actinomycetota</taxon>
        <taxon>Actinomycetes</taxon>
        <taxon>Mycobacteriales</taxon>
        <taxon>Mycobacteriaceae</taxon>
        <taxon>Mycolicibacterium</taxon>
    </lineage>
</organism>
<evidence type="ECO:0000255" key="1">
    <source>
        <dbReference type="HAMAP-Rule" id="MF_01328"/>
    </source>
</evidence>
<evidence type="ECO:0000256" key="2">
    <source>
        <dbReference type="SAM" id="MobiDB-lite"/>
    </source>
</evidence>
<evidence type="ECO:0000305" key="3"/>
<feature type="chain" id="PRO_0000129246" description="Large ribosomal subunit protein uL4">
    <location>
        <begin position="1"/>
        <end position="215"/>
    </location>
</feature>
<feature type="region of interest" description="Disordered" evidence="2">
    <location>
        <begin position="43"/>
        <end position="100"/>
    </location>
</feature>
<reference key="1">
    <citation type="journal article" date="1997" name="Mol. Microbiol.">
        <title>The role of ribosomal RNAs in macrolide resistance.</title>
        <authorList>
            <person name="Sander P."/>
            <person name="Prammananan T."/>
            <person name="Meier A."/>
            <person name="Frischkorn K."/>
            <person name="Boettger E.C."/>
        </authorList>
    </citation>
    <scope>NUCLEOTIDE SEQUENCE [GENOMIC DNA]</scope>
</reference>
<proteinExistence type="inferred from homology"/>
<dbReference type="EMBL" id="Y13226">
    <property type="protein sequence ID" value="CAA73669.1"/>
    <property type="molecule type" value="Genomic_DNA"/>
</dbReference>
<dbReference type="SMR" id="O06114"/>
<dbReference type="eggNOG" id="COG0088">
    <property type="taxonomic scope" value="Bacteria"/>
</dbReference>
<dbReference type="GO" id="GO:1990904">
    <property type="term" value="C:ribonucleoprotein complex"/>
    <property type="evidence" value="ECO:0007669"/>
    <property type="project" value="UniProtKB-KW"/>
</dbReference>
<dbReference type="GO" id="GO:0005840">
    <property type="term" value="C:ribosome"/>
    <property type="evidence" value="ECO:0007669"/>
    <property type="project" value="UniProtKB-KW"/>
</dbReference>
<dbReference type="GO" id="GO:0019843">
    <property type="term" value="F:rRNA binding"/>
    <property type="evidence" value="ECO:0007669"/>
    <property type="project" value="UniProtKB-UniRule"/>
</dbReference>
<dbReference type="GO" id="GO:0003735">
    <property type="term" value="F:structural constituent of ribosome"/>
    <property type="evidence" value="ECO:0007669"/>
    <property type="project" value="InterPro"/>
</dbReference>
<dbReference type="GO" id="GO:0006412">
    <property type="term" value="P:translation"/>
    <property type="evidence" value="ECO:0007669"/>
    <property type="project" value="UniProtKB-UniRule"/>
</dbReference>
<dbReference type="FunFam" id="3.40.1370.10:FF:000004">
    <property type="entry name" value="50S ribosomal protein L4"/>
    <property type="match status" value="1"/>
</dbReference>
<dbReference type="Gene3D" id="3.40.1370.10">
    <property type="match status" value="1"/>
</dbReference>
<dbReference type="HAMAP" id="MF_01328_B">
    <property type="entry name" value="Ribosomal_uL4_B"/>
    <property type="match status" value="1"/>
</dbReference>
<dbReference type="InterPro" id="IPR002136">
    <property type="entry name" value="Ribosomal_uL4"/>
</dbReference>
<dbReference type="InterPro" id="IPR013005">
    <property type="entry name" value="Ribosomal_uL4-like"/>
</dbReference>
<dbReference type="InterPro" id="IPR023574">
    <property type="entry name" value="Ribosomal_uL4_dom_sf"/>
</dbReference>
<dbReference type="NCBIfam" id="TIGR03953">
    <property type="entry name" value="rplD_bact"/>
    <property type="match status" value="1"/>
</dbReference>
<dbReference type="PANTHER" id="PTHR10746">
    <property type="entry name" value="50S RIBOSOMAL PROTEIN L4"/>
    <property type="match status" value="1"/>
</dbReference>
<dbReference type="PANTHER" id="PTHR10746:SF6">
    <property type="entry name" value="LARGE RIBOSOMAL SUBUNIT PROTEIN UL4M"/>
    <property type="match status" value="1"/>
</dbReference>
<dbReference type="Pfam" id="PF00573">
    <property type="entry name" value="Ribosomal_L4"/>
    <property type="match status" value="1"/>
</dbReference>
<dbReference type="SUPFAM" id="SSF52166">
    <property type="entry name" value="Ribosomal protein L4"/>
    <property type="match status" value="1"/>
</dbReference>
<keyword id="KW-0687">Ribonucleoprotein</keyword>
<keyword id="KW-0689">Ribosomal protein</keyword>
<keyword id="KW-0694">RNA-binding</keyword>
<keyword id="KW-0699">rRNA-binding</keyword>
<accession>O06114</accession>
<name>RL4_MYCSM</name>